<name>RUVC_PSELT</name>
<organism>
    <name type="scientific">Pseudothermotoga lettingae (strain ATCC BAA-301 / DSM 14385 / NBRC 107922 / TMO)</name>
    <name type="common">Thermotoga lettingae</name>
    <dbReference type="NCBI Taxonomy" id="416591"/>
    <lineage>
        <taxon>Bacteria</taxon>
        <taxon>Thermotogati</taxon>
        <taxon>Thermotogota</taxon>
        <taxon>Thermotogae</taxon>
        <taxon>Thermotogales</taxon>
        <taxon>Thermotogaceae</taxon>
        <taxon>Pseudothermotoga</taxon>
    </lineage>
</organism>
<dbReference type="EC" id="3.1.21.10" evidence="1"/>
<dbReference type="EMBL" id="CP000812">
    <property type="protein sequence ID" value="ABV32810.1"/>
    <property type="molecule type" value="Genomic_DNA"/>
</dbReference>
<dbReference type="RefSeq" id="WP_012002291.1">
    <property type="nucleotide sequence ID" value="NZ_BSDV01000001.1"/>
</dbReference>
<dbReference type="SMR" id="A8F3S6"/>
<dbReference type="STRING" id="416591.Tlet_0240"/>
<dbReference type="KEGG" id="tle:Tlet_0240"/>
<dbReference type="eggNOG" id="COG0817">
    <property type="taxonomic scope" value="Bacteria"/>
</dbReference>
<dbReference type="HOGENOM" id="CLU_091257_3_1_0"/>
<dbReference type="OrthoDB" id="9805499at2"/>
<dbReference type="Proteomes" id="UP000002016">
    <property type="component" value="Chromosome"/>
</dbReference>
<dbReference type="GO" id="GO:0005737">
    <property type="term" value="C:cytoplasm"/>
    <property type="evidence" value="ECO:0007669"/>
    <property type="project" value="UniProtKB-SubCell"/>
</dbReference>
<dbReference type="GO" id="GO:0048476">
    <property type="term" value="C:Holliday junction resolvase complex"/>
    <property type="evidence" value="ECO:0007669"/>
    <property type="project" value="UniProtKB-UniRule"/>
</dbReference>
<dbReference type="GO" id="GO:0008821">
    <property type="term" value="F:crossover junction DNA endonuclease activity"/>
    <property type="evidence" value="ECO:0007669"/>
    <property type="project" value="UniProtKB-UniRule"/>
</dbReference>
<dbReference type="GO" id="GO:0003677">
    <property type="term" value="F:DNA binding"/>
    <property type="evidence" value="ECO:0007669"/>
    <property type="project" value="UniProtKB-KW"/>
</dbReference>
<dbReference type="GO" id="GO:0000287">
    <property type="term" value="F:magnesium ion binding"/>
    <property type="evidence" value="ECO:0007669"/>
    <property type="project" value="UniProtKB-UniRule"/>
</dbReference>
<dbReference type="GO" id="GO:0006310">
    <property type="term" value="P:DNA recombination"/>
    <property type="evidence" value="ECO:0007669"/>
    <property type="project" value="UniProtKB-UniRule"/>
</dbReference>
<dbReference type="GO" id="GO:0006281">
    <property type="term" value="P:DNA repair"/>
    <property type="evidence" value="ECO:0007669"/>
    <property type="project" value="UniProtKB-UniRule"/>
</dbReference>
<dbReference type="CDD" id="cd16962">
    <property type="entry name" value="RuvC"/>
    <property type="match status" value="1"/>
</dbReference>
<dbReference type="FunFam" id="3.30.420.10:FF:000002">
    <property type="entry name" value="Crossover junction endodeoxyribonuclease RuvC"/>
    <property type="match status" value="1"/>
</dbReference>
<dbReference type="Gene3D" id="3.30.420.10">
    <property type="entry name" value="Ribonuclease H-like superfamily/Ribonuclease H"/>
    <property type="match status" value="1"/>
</dbReference>
<dbReference type="HAMAP" id="MF_00034">
    <property type="entry name" value="RuvC"/>
    <property type="match status" value="1"/>
</dbReference>
<dbReference type="InterPro" id="IPR012337">
    <property type="entry name" value="RNaseH-like_sf"/>
</dbReference>
<dbReference type="InterPro" id="IPR036397">
    <property type="entry name" value="RNaseH_sf"/>
</dbReference>
<dbReference type="InterPro" id="IPR002176">
    <property type="entry name" value="X-over_junc_endoDNase_RuvC"/>
</dbReference>
<dbReference type="NCBIfam" id="NF000711">
    <property type="entry name" value="PRK00039.2-1"/>
    <property type="match status" value="1"/>
</dbReference>
<dbReference type="NCBIfam" id="TIGR00228">
    <property type="entry name" value="ruvC"/>
    <property type="match status" value="1"/>
</dbReference>
<dbReference type="PANTHER" id="PTHR30194">
    <property type="entry name" value="CROSSOVER JUNCTION ENDODEOXYRIBONUCLEASE RUVC"/>
    <property type="match status" value="1"/>
</dbReference>
<dbReference type="PANTHER" id="PTHR30194:SF3">
    <property type="entry name" value="CROSSOVER JUNCTION ENDODEOXYRIBONUCLEASE RUVC"/>
    <property type="match status" value="1"/>
</dbReference>
<dbReference type="Pfam" id="PF02075">
    <property type="entry name" value="RuvC"/>
    <property type="match status" value="1"/>
</dbReference>
<dbReference type="PRINTS" id="PR00696">
    <property type="entry name" value="RSOLVASERUVC"/>
</dbReference>
<dbReference type="SUPFAM" id="SSF53098">
    <property type="entry name" value="Ribonuclease H-like"/>
    <property type="match status" value="1"/>
</dbReference>
<evidence type="ECO:0000255" key="1">
    <source>
        <dbReference type="HAMAP-Rule" id="MF_00034"/>
    </source>
</evidence>
<feature type="chain" id="PRO_1000057269" description="Crossover junction endodeoxyribonuclease RuvC">
    <location>
        <begin position="1"/>
        <end position="162"/>
    </location>
</feature>
<feature type="active site" evidence="1">
    <location>
        <position position="7"/>
    </location>
</feature>
<feature type="active site" evidence="1">
    <location>
        <position position="67"/>
    </location>
</feature>
<feature type="active site" evidence="1">
    <location>
        <position position="140"/>
    </location>
</feature>
<feature type="binding site" evidence="1">
    <location>
        <position position="7"/>
    </location>
    <ligand>
        <name>Mg(2+)</name>
        <dbReference type="ChEBI" id="CHEBI:18420"/>
        <label>1</label>
    </ligand>
</feature>
<feature type="binding site" evidence="1">
    <location>
        <position position="67"/>
    </location>
    <ligand>
        <name>Mg(2+)</name>
        <dbReference type="ChEBI" id="CHEBI:18420"/>
        <label>2</label>
    </ligand>
</feature>
<feature type="binding site" evidence="1">
    <location>
        <position position="140"/>
    </location>
    <ligand>
        <name>Mg(2+)</name>
        <dbReference type="ChEBI" id="CHEBI:18420"/>
        <label>1</label>
    </ligand>
</feature>
<reference key="1">
    <citation type="submission" date="2007-08" db="EMBL/GenBank/DDBJ databases">
        <title>Complete sequence of Thermotoga lettingae TMO.</title>
        <authorList>
            <consortium name="US DOE Joint Genome Institute"/>
            <person name="Copeland A."/>
            <person name="Lucas S."/>
            <person name="Lapidus A."/>
            <person name="Barry K."/>
            <person name="Glavina del Rio T."/>
            <person name="Dalin E."/>
            <person name="Tice H."/>
            <person name="Pitluck S."/>
            <person name="Foster B."/>
            <person name="Bruce D."/>
            <person name="Schmutz J."/>
            <person name="Larimer F."/>
            <person name="Land M."/>
            <person name="Hauser L."/>
            <person name="Kyrpides N."/>
            <person name="Mikhailova N."/>
            <person name="Nelson K."/>
            <person name="Gogarten J.P."/>
            <person name="Noll K."/>
            <person name="Richardson P."/>
        </authorList>
    </citation>
    <scope>NUCLEOTIDE SEQUENCE [LARGE SCALE GENOMIC DNA]</scope>
    <source>
        <strain>ATCC BAA-301 / DSM 14385 / NBRC 107922 / TMO</strain>
    </source>
</reference>
<proteinExistence type="inferred from homology"/>
<accession>A8F3S6</accession>
<gene>
    <name evidence="1" type="primary">ruvC</name>
    <name type="ordered locus">Tlet_0240</name>
</gene>
<sequence length="162" mass="17868">MIIFGVDPGFGILGYGVLSVSGNSFQHVSHGTIQTEKQQNIALRLKVLYEELSNVIDNFKPSEIAMEKLFFSRNITTAISVGEARGIVLLLAAQRNIPVFEYTPHEIKKAVTGSGKASKKDVQQMIKILLNLKELPKPDDAADGLAIAWCHCAVRNITRRFS</sequence>
<keyword id="KW-0963">Cytoplasm</keyword>
<keyword id="KW-0227">DNA damage</keyword>
<keyword id="KW-0233">DNA recombination</keyword>
<keyword id="KW-0234">DNA repair</keyword>
<keyword id="KW-0238">DNA-binding</keyword>
<keyword id="KW-0255">Endonuclease</keyword>
<keyword id="KW-0378">Hydrolase</keyword>
<keyword id="KW-0460">Magnesium</keyword>
<keyword id="KW-0479">Metal-binding</keyword>
<keyword id="KW-0540">Nuclease</keyword>
<keyword id="KW-1185">Reference proteome</keyword>
<protein>
    <recommendedName>
        <fullName evidence="1">Crossover junction endodeoxyribonuclease RuvC</fullName>
        <ecNumber evidence="1">3.1.21.10</ecNumber>
    </recommendedName>
    <alternativeName>
        <fullName evidence="1">Holliday junction nuclease RuvC</fullName>
    </alternativeName>
    <alternativeName>
        <fullName evidence="1">Holliday junction resolvase RuvC</fullName>
    </alternativeName>
</protein>
<comment type="function">
    <text evidence="1">The RuvA-RuvB-RuvC complex processes Holliday junction (HJ) DNA during genetic recombination and DNA repair. Endonuclease that resolves HJ intermediates. Cleaves cruciform DNA by making single-stranded nicks across the HJ at symmetrical positions within the homologous arms, yielding a 5'-phosphate and a 3'-hydroxyl group; requires a central core of homology in the junction. The consensus cleavage sequence is 5'-(A/T)TT(C/G)-3'. Cleavage occurs on the 3'-side of the TT dinucleotide at the point of strand exchange. HJ branch migration catalyzed by RuvA-RuvB allows RuvC to scan DNA until it finds its consensus sequence, where it cleaves and resolves the cruciform DNA.</text>
</comment>
<comment type="catalytic activity">
    <reaction evidence="1">
        <text>Endonucleolytic cleavage at a junction such as a reciprocal single-stranded crossover between two homologous DNA duplexes (Holliday junction).</text>
        <dbReference type="EC" id="3.1.21.10"/>
    </reaction>
</comment>
<comment type="cofactor">
    <cofactor evidence="1">
        <name>Mg(2+)</name>
        <dbReference type="ChEBI" id="CHEBI:18420"/>
    </cofactor>
    <text evidence="1">Binds 2 Mg(2+) ion per subunit.</text>
</comment>
<comment type="subunit">
    <text evidence="1">Homodimer which binds Holliday junction (HJ) DNA. The HJ becomes 2-fold symmetrical on binding to RuvC with unstacked arms; it has a different conformation from HJ DNA in complex with RuvA. In the full resolvosome a probable DNA-RuvA(4)-RuvB(12)-RuvC(2) complex forms which resolves the HJ.</text>
</comment>
<comment type="subcellular location">
    <subcellularLocation>
        <location evidence="1">Cytoplasm</location>
    </subcellularLocation>
</comment>
<comment type="similarity">
    <text evidence="1">Belongs to the RuvC family.</text>
</comment>